<proteinExistence type="inferred from homology"/>
<protein>
    <recommendedName>
        <fullName evidence="1">Nucleoid occlusion factor SlmA</fullName>
    </recommendedName>
</protein>
<reference key="1">
    <citation type="submission" date="2007-07" db="EMBL/GenBank/DDBJ databases">
        <title>Complete sequence of chromosome of Shewanella baltica OS185.</title>
        <authorList>
            <consortium name="US DOE Joint Genome Institute"/>
            <person name="Copeland A."/>
            <person name="Lucas S."/>
            <person name="Lapidus A."/>
            <person name="Barry K."/>
            <person name="Glavina del Rio T."/>
            <person name="Dalin E."/>
            <person name="Tice H."/>
            <person name="Pitluck S."/>
            <person name="Sims D."/>
            <person name="Brettin T."/>
            <person name="Bruce D."/>
            <person name="Detter J.C."/>
            <person name="Han C."/>
            <person name="Schmutz J."/>
            <person name="Larimer F."/>
            <person name="Land M."/>
            <person name="Hauser L."/>
            <person name="Kyrpides N."/>
            <person name="Mikhailova N."/>
            <person name="Brettar I."/>
            <person name="Rodrigues J."/>
            <person name="Konstantinidis K."/>
            <person name="Tiedje J."/>
            <person name="Richardson P."/>
        </authorList>
    </citation>
    <scope>NUCLEOTIDE SEQUENCE [LARGE SCALE GENOMIC DNA]</scope>
    <source>
        <strain>OS185</strain>
    </source>
</reference>
<keyword id="KW-0131">Cell cycle</keyword>
<keyword id="KW-0132">Cell division</keyword>
<keyword id="KW-0175">Coiled coil</keyword>
<keyword id="KW-0963">Cytoplasm</keyword>
<keyword id="KW-0238">DNA-binding</keyword>
<evidence type="ECO:0000255" key="1">
    <source>
        <dbReference type="HAMAP-Rule" id="MF_01839"/>
    </source>
</evidence>
<dbReference type="EMBL" id="CP000753">
    <property type="protein sequence ID" value="ABS06542.1"/>
    <property type="molecule type" value="Genomic_DNA"/>
</dbReference>
<dbReference type="RefSeq" id="WP_006079866.1">
    <property type="nucleotide sequence ID" value="NC_009665.1"/>
</dbReference>
<dbReference type="SMR" id="A6WIA3"/>
<dbReference type="GeneID" id="11770724"/>
<dbReference type="KEGG" id="sbm:Shew185_0373"/>
<dbReference type="HOGENOM" id="CLU_069356_5_0_6"/>
<dbReference type="GO" id="GO:0043590">
    <property type="term" value="C:bacterial nucleoid"/>
    <property type="evidence" value="ECO:0007669"/>
    <property type="project" value="UniProtKB-UniRule"/>
</dbReference>
<dbReference type="GO" id="GO:0005737">
    <property type="term" value="C:cytoplasm"/>
    <property type="evidence" value="ECO:0007669"/>
    <property type="project" value="UniProtKB-UniRule"/>
</dbReference>
<dbReference type="GO" id="GO:0043565">
    <property type="term" value="F:sequence-specific DNA binding"/>
    <property type="evidence" value="ECO:0007669"/>
    <property type="project" value="UniProtKB-UniRule"/>
</dbReference>
<dbReference type="GO" id="GO:0051301">
    <property type="term" value="P:cell division"/>
    <property type="evidence" value="ECO:0007669"/>
    <property type="project" value="UniProtKB-KW"/>
</dbReference>
<dbReference type="GO" id="GO:0010974">
    <property type="term" value="P:negative regulation of division septum assembly"/>
    <property type="evidence" value="ECO:0007669"/>
    <property type="project" value="InterPro"/>
</dbReference>
<dbReference type="Gene3D" id="1.10.357.10">
    <property type="entry name" value="Tetracycline Repressor, domain 2"/>
    <property type="match status" value="1"/>
</dbReference>
<dbReference type="HAMAP" id="MF_01839">
    <property type="entry name" value="NO_factor_SlmA"/>
    <property type="match status" value="1"/>
</dbReference>
<dbReference type="InterPro" id="IPR009057">
    <property type="entry name" value="Homeodomain-like_sf"/>
</dbReference>
<dbReference type="InterPro" id="IPR050624">
    <property type="entry name" value="HTH-type_Tx_Regulator"/>
</dbReference>
<dbReference type="InterPro" id="IPR001647">
    <property type="entry name" value="HTH_TetR"/>
</dbReference>
<dbReference type="InterPro" id="IPR023769">
    <property type="entry name" value="NO_SlmA"/>
</dbReference>
<dbReference type="InterPro" id="IPR054580">
    <property type="entry name" value="SlmA-like_C"/>
</dbReference>
<dbReference type="NCBIfam" id="NF007015">
    <property type="entry name" value="PRK09480.1"/>
    <property type="match status" value="1"/>
</dbReference>
<dbReference type="PANTHER" id="PTHR43479">
    <property type="entry name" value="ACREF/ENVCD OPERON REPRESSOR-RELATED"/>
    <property type="match status" value="1"/>
</dbReference>
<dbReference type="PANTHER" id="PTHR43479:SF11">
    <property type="entry name" value="ACREF_ENVCD OPERON REPRESSOR-RELATED"/>
    <property type="match status" value="1"/>
</dbReference>
<dbReference type="Pfam" id="PF22276">
    <property type="entry name" value="SlmA-like_C"/>
    <property type="match status" value="1"/>
</dbReference>
<dbReference type="Pfam" id="PF00440">
    <property type="entry name" value="TetR_N"/>
    <property type="match status" value="1"/>
</dbReference>
<dbReference type="SUPFAM" id="SSF46689">
    <property type="entry name" value="Homeodomain-like"/>
    <property type="match status" value="1"/>
</dbReference>
<dbReference type="PROSITE" id="PS50977">
    <property type="entry name" value="HTH_TETR_2"/>
    <property type="match status" value="1"/>
</dbReference>
<gene>
    <name evidence="1" type="primary">slmA</name>
    <name type="ordered locus">Shew185_0373</name>
</gene>
<organism>
    <name type="scientific">Shewanella baltica (strain OS185)</name>
    <dbReference type="NCBI Taxonomy" id="402882"/>
    <lineage>
        <taxon>Bacteria</taxon>
        <taxon>Pseudomonadati</taxon>
        <taxon>Pseudomonadota</taxon>
        <taxon>Gammaproteobacteria</taxon>
        <taxon>Alteromonadales</taxon>
        <taxon>Shewanellaceae</taxon>
        <taxon>Shewanella</taxon>
    </lineage>
</organism>
<comment type="function">
    <text evidence="1">Required for nucleoid occlusion (NO) phenomenon, which prevents Z-ring formation and cell division over the nucleoid. Acts as a DNA-associated cell division inhibitor that binds simultaneously chromosomal DNA and FtsZ, and disrupts the assembly of FtsZ polymers. SlmA-DNA-binding sequences (SBS) are dispersed on non-Ter regions of the chromosome, preventing FtsZ polymerization at these regions.</text>
</comment>
<comment type="subunit">
    <text evidence="1">Homodimer. Interacts with FtsZ.</text>
</comment>
<comment type="subcellular location">
    <subcellularLocation>
        <location evidence="1">Cytoplasm</location>
        <location evidence="1">Nucleoid</location>
    </subcellularLocation>
</comment>
<comment type="similarity">
    <text evidence="1">Belongs to the nucleoid occlusion factor SlmA family.</text>
</comment>
<sequence length="197" mass="22689">MAVSPKINRREHILQCLAQMLETNPGQRITTAKLASEVGVSEAALYRHFPSKARMFEGLIEFIEESLLSRINLIMDDEKDTMKRCQLVLQLLLIFAERNPGISRVLNGDALLGENERLRSRISNLFAKIETQLKQILREKTLREGKGFNLDEAILANLLLAFAEGRIAQFVRSEFKLKPTTHFDEQWRFIQHQLLQS</sequence>
<accession>A6WIA3</accession>
<name>SLMA_SHEB8</name>
<feature type="chain" id="PRO_1000070526" description="Nucleoid occlusion factor SlmA">
    <location>
        <begin position="1"/>
        <end position="197"/>
    </location>
</feature>
<feature type="domain" description="HTH tetR-type" evidence="1">
    <location>
        <begin position="7"/>
        <end position="67"/>
    </location>
</feature>
<feature type="DNA-binding region" description="H-T-H motif" evidence="1">
    <location>
        <begin position="30"/>
        <end position="49"/>
    </location>
</feature>
<feature type="coiled-coil region" evidence="1">
    <location>
        <begin position="109"/>
        <end position="136"/>
    </location>
</feature>